<feature type="chain" id="PRO_0000287073" description="Cyclin-U4-2">
    <location>
        <begin position="1"/>
        <end position="216"/>
    </location>
</feature>
<evidence type="ECO:0000269" key="1">
    <source>
    </source>
</evidence>
<evidence type="ECO:0000305" key="2"/>
<comment type="subunit">
    <text evidence="1">Interacts with CDKA-1.</text>
</comment>
<comment type="tissue specificity">
    <text evidence="1">Expressed in roots, stems and flowers. Expressed in the shoot apex, leaf primordia and young leaves.</text>
</comment>
<comment type="similarity">
    <text evidence="2">Belongs to the cyclin family. Cyclin U/P subfamily.</text>
</comment>
<organism>
    <name type="scientific">Arabidopsis thaliana</name>
    <name type="common">Mouse-ear cress</name>
    <dbReference type="NCBI Taxonomy" id="3702"/>
    <lineage>
        <taxon>Eukaryota</taxon>
        <taxon>Viridiplantae</taxon>
        <taxon>Streptophyta</taxon>
        <taxon>Embryophyta</taxon>
        <taxon>Tracheophyta</taxon>
        <taxon>Spermatophyta</taxon>
        <taxon>Magnoliopsida</taxon>
        <taxon>eudicotyledons</taxon>
        <taxon>Gunneridae</taxon>
        <taxon>Pentapetalae</taxon>
        <taxon>rosids</taxon>
        <taxon>malvids</taxon>
        <taxon>Brassicales</taxon>
        <taxon>Brassicaceae</taxon>
        <taxon>Camelineae</taxon>
        <taxon>Arabidopsis</taxon>
    </lineage>
</organism>
<keyword id="KW-0131">Cell cycle</keyword>
<keyword id="KW-0132">Cell division</keyword>
<keyword id="KW-0195">Cyclin</keyword>
<keyword id="KW-1185">Reference proteome</keyword>
<dbReference type="EMBL" id="AL163912">
    <property type="protein sequence ID" value="CAB87934.1"/>
    <property type="molecule type" value="Genomic_DNA"/>
</dbReference>
<dbReference type="EMBL" id="CP002688">
    <property type="protein sequence ID" value="AED91160.1"/>
    <property type="molecule type" value="Genomic_DNA"/>
</dbReference>
<dbReference type="EMBL" id="AK119113">
    <property type="protein sequence ID" value="BAC43685.1"/>
    <property type="molecule type" value="mRNA"/>
</dbReference>
<dbReference type="EMBL" id="BT005235">
    <property type="protein sequence ID" value="AAO63299.1"/>
    <property type="molecule type" value="mRNA"/>
</dbReference>
<dbReference type="PIR" id="T49884">
    <property type="entry name" value="T49884"/>
</dbReference>
<dbReference type="RefSeq" id="NP_196362.1">
    <property type="nucleotide sequence ID" value="NM_120827.3"/>
</dbReference>
<dbReference type="SMR" id="Q9LY16"/>
<dbReference type="BioGRID" id="15915">
    <property type="interactions" value="1"/>
</dbReference>
<dbReference type="FunCoup" id="Q9LY16">
    <property type="interactions" value="52"/>
</dbReference>
<dbReference type="IntAct" id="Q9LY16">
    <property type="interactions" value="1"/>
</dbReference>
<dbReference type="STRING" id="3702.Q9LY16"/>
<dbReference type="PaxDb" id="3702-AT5G07450.1"/>
<dbReference type="DNASU" id="830636"/>
<dbReference type="EnsemblPlants" id="AT5G07450.1">
    <property type="protein sequence ID" value="AT5G07450.1"/>
    <property type="gene ID" value="AT5G07450"/>
</dbReference>
<dbReference type="GeneID" id="830636"/>
<dbReference type="Gramene" id="AT5G07450.1">
    <property type="protein sequence ID" value="AT5G07450.1"/>
    <property type="gene ID" value="AT5G07450"/>
</dbReference>
<dbReference type="KEGG" id="ath:AT5G07450"/>
<dbReference type="Araport" id="AT5G07450"/>
<dbReference type="TAIR" id="AT5G07450">
    <property type="gene designation" value="CYCP4"/>
</dbReference>
<dbReference type="eggNOG" id="KOG1674">
    <property type="taxonomic scope" value="Eukaryota"/>
</dbReference>
<dbReference type="HOGENOM" id="CLU_057371_1_1_1"/>
<dbReference type="InParanoid" id="Q9LY16"/>
<dbReference type="OMA" id="IFKHANC"/>
<dbReference type="PhylomeDB" id="Q9LY16"/>
<dbReference type="PRO" id="PR:Q9LY16"/>
<dbReference type="Proteomes" id="UP000006548">
    <property type="component" value="Chromosome 5"/>
</dbReference>
<dbReference type="ExpressionAtlas" id="Q9LY16">
    <property type="expression patterns" value="baseline and differential"/>
</dbReference>
<dbReference type="GO" id="GO:0019901">
    <property type="term" value="F:protein kinase binding"/>
    <property type="evidence" value="ECO:0007669"/>
    <property type="project" value="InterPro"/>
</dbReference>
<dbReference type="GO" id="GO:0051301">
    <property type="term" value="P:cell division"/>
    <property type="evidence" value="ECO:0007669"/>
    <property type="project" value="UniProtKB-KW"/>
</dbReference>
<dbReference type="CDD" id="cd20604">
    <property type="entry name" value="CYCLIN_AtCycU-like"/>
    <property type="match status" value="1"/>
</dbReference>
<dbReference type="Gene3D" id="1.10.472.10">
    <property type="entry name" value="Cyclin-like"/>
    <property type="match status" value="1"/>
</dbReference>
<dbReference type="InterPro" id="IPR036915">
    <property type="entry name" value="Cyclin-like_sf"/>
</dbReference>
<dbReference type="InterPro" id="IPR012389">
    <property type="entry name" value="Cyclin_P/U"/>
</dbReference>
<dbReference type="InterPro" id="IPR013922">
    <property type="entry name" value="Cyclin_PHO80-like"/>
</dbReference>
<dbReference type="PANTHER" id="PTHR15615">
    <property type="match status" value="1"/>
</dbReference>
<dbReference type="PANTHER" id="PTHR15615:SF103">
    <property type="entry name" value="CYCLIN-U4-2"/>
    <property type="match status" value="1"/>
</dbReference>
<dbReference type="Pfam" id="PF08613">
    <property type="entry name" value="Cyclin"/>
    <property type="match status" value="1"/>
</dbReference>
<dbReference type="PIRSF" id="PIRSF027110">
    <property type="entry name" value="PREG"/>
    <property type="match status" value="1"/>
</dbReference>
<dbReference type="SUPFAM" id="SSF47954">
    <property type="entry name" value="Cyclin-like"/>
    <property type="match status" value="1"/>
</dbReference>
<name>CCU42_ARATH</name>
<gene>
    <name type="primary">CYCU4-2</name>
    <name type="ordered locus">At5g07450</name>
    <name type="ORF">T2I1.160</name>
</gene>
<sequence length="216" mass="25005">MAYQIDQKMIHDQEPMAEIMPNVITAMSSLLQRVSETNDDLSRPFREHKRISAFNAVTKPSISIRSYMERIFKYADCSDSCYIVAYIYLDRFIQKQPLLPIDSSNVHRLIITSVLVSAKFMDDLCYNNAFYAKVGGITTEEMNLLELDFLFGIGFQLNVTISTYNDYCSSLQREMVMRTMYSPLLEPAFLVRSFHKNLLKNLYDEDHRNSQVTSAV</sequence>
<proteinExistence type="evidence at protein level"/>
<protein>
    <recommendedName>
        <fullName>Cyclin-U4-2</fullName>
        <shortName>CycU4;2</shortName>
    </recommendedName>
    <alternativeName>
        <fullName>Cyclin-P4.3</fullName>
        <shortName>CycP4;3</shortName>
    </alternativeName>
</protein>
<reference key="1">
    <citation type="journal article" date="2000" name="Nature">
        <title>Sequence and analysis of chromosome 5 of the plant Arabidopsis thaliana.</title>
        <authorList>
            <person name="Tabata S."/>
            <person name="Kaneko T."/>
            <person name="Nakamura Y."/>
            <person name="Kotani H."/>
            <person name="Kato T."/>
            <person name="Asamizu E."/>
            <person name="Miyajima N."/>
            <person name="Sasamoto S."/>
            <person name="Kimura T."/>
            <person name="Hosouchi T."/>
            <person name="Kawashima K."/>
            <person name="Kohara M."/>
            <person name="Matsumoto M."/>
            <person name="Matsuno A."/>
            <person name="Muraki A."/>
            <person name="Nakayama S."/>
            <person name="Nakazaki N."/>
            <person name="Naruo K."/>
            <person name="Okumura S."/>
            <person name="Shinpo S."/>
            <person name="Takeuchi C."/>
            <person name="Wada T."/>
            <person name="Watanabe A."/>
            <person name="Yamada M."/>
            <person name="Yasuda M."/>
            <person name="Sato S."/>
            <person name="de la Bastide M."/>
            <person name="Huang E."/>
            <person name="Spiegel L."/>
            <person name="Gnoj L."/>
            <person name="O'Shaughnessy A."/>
            <person name="Preston R."/>
            <person name="Habermann K."/>
            <person name="Murray J."/>
            <person name="Johnson D."/>
            <person name="Rohlfing T."/>
            <person name="Nelson J."/>
            <person name="Stoneking T."/>
            <person name="Pepin K."/>
            <person name="Spieth J."/>
            <person name="Sekhon M."/>
            <person name="Armstrong J."/>
            <person name="Becker M."/>
            <person name="Belter E."/>
            <person name="Cordum H."/>
            <person name="Cordes M."/>
            <person name="Courtney L."/>
            <person name="Courtney W."/>
            <person name="Dante M."/>
            <person name="Du H."/>
            <person name="Edwards J."/>
            <person name="Fryman J."/>
            <person name="Haakensen B."/>
            <person name="Lamar E."/>
            <person name="Latreille P."/>
            <person name="Leonard S."/>
            <person name="Meyer R."/>
            <person name="Mulvaney E."/>
            <person name="Ozersky P."/>
            <person name="Riley A."/>
            <person name="Strowmatt C."/>
            <person name="Wagner-McPherson C."/>
            <person name="Wollam A."/>
            <person name="Yoakum M."/>
            <person name="Bell M."/>
            <person name="Dedhia N."/>
            <person name="Parnell L."/>
            <person name="Shah R."/>
            <person name="Rodriguez M."/>
            <person name="Hoon See L."/>
            <person name="Vil D."/>
            <person name="Baker J."/>
            <person name="Kirchoff K."/>
            <person name="Toth K."/>
            <person name="King L."/>
            <person name="Bahret A."/>
            <person name="Miller B."/>
            <person name="Marra M.A."/>
            <person name="Martienssen R."/>
            <person name="McCombie W.R."/>
            <person name="Wilson R.K."/>
            <person name="Murphy G."/>
            <person name="Bancroft I."/>
            <person name="Volckaert G."/>
            <person name="Wambutt R."/>
            <person name="Duesterhoeft A."/>
            <person name="Stiekema W."/>
            <person name="Pohl T."/>
            <person name="Entian K.-D."/>
            <person name="Terryn N."/>
            <person name="Hartley N."/>
            <person name="Bent E."/>
            <person name="Johnson S."/>
            <person name="Langham S.-A."/>
            <person name="McCullagh B."/>
            <person name="Robben J."/>
            <person name="Grymonprez B."/>
            <person name="Zimmermann W."/>
            <person name="Ramsperger U."/>
            <person name="Wedler H."/>
            <person name="Balke K."/>
            <person name="Wedler E."/>
            <person name="Peters S."/>
            <person name="van Staveren M."/>
            <person name="Dirkse W."/>
            <person name="Mooijman P."/>
            <person name="Klein Lankhorst R."/>
            <person name="Weitzenegger T."/>
            <person name="Bothe G."/>
            <person name="Rose M."/>
            <person name="Hauf J."/>
            <person name="Berneiser S."/>
            <person name="Hempel S."/>
            <person name="Feldpausch M."/>
            <person name="Lamberth S."/>
            <person name="Villarroel R."/>
            <person name="Gielen J."/>
            <person name="Ardiles W."/>
            <person name="Bents O."/>
            <person name="Lemcke K."/>
            <person name="Kolesov G."/>
            <person name="Mayer K.F.X."/>
            <person name="Rudd S."/>
            <person name="Schoof H."/>
            <person name="Schueller C."/>
            <person name="Zaccaria P."/>
            <person name="Mewes H.-W."/>
            <person name="Bevan M."/>
            <person name="Fransz P.F."/>
        </authorList>
    </citation>
    <scope>NUCLEOTIDE SEQUENCE [LARGE SCALE GENOMIC DNA]</scope>
    <source>
        <strain>cv. Columbia</strain>
    </source>
</reference>
<reference key="2">
    <citation type="journal article" date="2017" name="Plant J.">
        <title>Araport11: a complete reannotation of the Arabidopsis thaliana reference genome.</title>
        <authorList>
            <person name="Cheng C.Y."/>
            <person name="Krishnakumar V."/>
            <person name="Chan A.P."/>
            <person name="Thibaud-Nissen F."/>
            <person name="Schobel S."/>
            <person name="Town C.D."/>
        </authorList>
    </citation>
    <scope>GENOME REANNOTATION</scope>
    <source>
        <strain>cv. Columbia</strain>
    </source>
</reference>
<reference key="3">
    <citation type="journal article" date="2002" name="Science">
        <title>Functional annotation of a full-length Arabidopsis cDNA collection.</title>
        <authorList>
            <person name="Seki M."/>
            <person name="Narusaka M."/>
            <person name="Kamiya A."/>
            <person name="Ishida J."/>
            <person name="Satou M."/>
            <person name="Sakurai T."/>
            <person name="Nakajima M."/>
            <person name="Enju A."/>
            <person name="Akiyama K."/>
            <person name="Oono Y."/>
            <person name="Muramatsu M."/>
            <person name="Hayashizaki Y."/>
            <person name="Kawai J."/>
            <person name="Carninci P."/>
            <person name="Itoh M."/>
            <person name="Ishii Y."/>
            <person name="Arakawa T."/>
            <person name="Shibata K."/>
            <person name="Shinagawa A."/>
            <person name="Shinozaki K."/>
        </authorList>
    </citation>
    <scope>NUCLEOTIDE SEQUENCE [LARGE SCALE MRNA]</scope>
    <source>
        <strain>cv. Columbia</strain>
    </source>
</reference>
<reference key="4">
    <citation type="journal article" date="2003" name="Science">
        <title>Empirical analysis of transcriptional activity in the Arabidopsis genome.</title>
        <authorList>
            <person name="Yamada K."/>
            <person name="Lim J."/>
            <person name="Dale J.M."/>
            <person name="Chen H."/>
            <person name="Shinn P."/>
            <person name="Palm C.J."/>
            <person name="Southwick A.M."/>
            <person name="Wu H.C."/>
            <person name="Kim C.J."/>
            <person name="Nguyen M."/>
            <person name="Pham P.K."/>
            <person name="Cheuk R.F."/>
            <person name="Karlin-Newmann G."/>
            <person name="Liu S.X."/>
            <person name="Lam B."/>
            <person name="Sakano H."/>
            <person name="Wu T."/>
            <person name="Yu G."/>
            <person name="Miranda M."/>
            <person name="Quach H.L."/>
            <person name="Tripp M."/>
            <person name="Chang C.H."/>
            <person name="Lee J.M."/>
            <person name="Toriumi M.J."/>
            <person name="Chan M.M."/>
            <person name="Tang C.C."/>
            <person name="Onodera C.S."/>
            <person name="Deng J.M."/>
            <person name="Akiyama K."/>
            <person name="Ansari Y."/>
            <person name="Arakawa T."/>
            <person name="Banh J."/>
            <person name="Banno F."/>
            <person name="Bowser L."/>
            <person name="Brooks S.Y."/>
            <person name="Carninci P."/>
            <person name="Chao Q."/>
            <person name="Choy N."/>
            <person name="Enju A."/>
            <person name="Goldsmith A.D."/>
            <person name="Gurjal M."/>
            <person name="Hansen N.F."/>
            <person name="Hayashizaki Y."/>
            <person name="Johnson-Hopson C."/>
            <person name="Hsuan V.W."/>
            <person name="Iida K."/>
            <person name="Karnes M."/>
            <person name="Khan S."/>
            <person name="Koesema E."/>
            <person name="Ishida J."/>
            <person name="Jiang P.X."/>
            <person name="Jones T."/>
            <person name="Kawai J."/>
            <person name="Kamiya A."/>
            <person name="Meyers C."/>
            <person name="Nakajima M."/>
            <person name="Narusaka M."/>
            <person name="Seki M."/>
            <person name="Sakurai T."/>
            <person name="Satou M."/>
            <person name="Tamse R."/>
            <person name="Vaysberg M."/>
            <person name="Wallender E.K."/>
            <person name="Wong C."/>
            <person name="Yamamura Y."/>
            <person name="Yuan S."/>
            <person name="Shinozaki K."/>
            <person name="Davis R.W."/>
            <person name="Theologis A."/>
            <person name="Ecker J.R."/>
        </authorList>
    </citation>
    <scope>NUCLEOTIDE SEQUENCE [LARGE SCALE MRNA]</scope>
    <source>
        <strain>cv. Columbia</strain>
    </source>
</reference>
<reference key="5">
    <citation type="journal article" date="2004" name="Cell. Mol. Life Sci.">
        <title>Molecular characterization of Arabidopsis PHO80-like proteins, a novel class of CDKA;1-interacting cyclins.</title>
        <authorList>
            <person name="Torres Acosta J.A."/>
            <person name="de Almeida Engler J."/>
            <person name="Raes J."/>
            <person name="Magyar Z."/>
            <person name="de Groodt R."/>
            <person name="Inze D."/>
            <person name="de Veylder L."/>
        </authorList>
    </citation>
    <scope>TISSUE SPECIFICITY</scope>
    <scope>INTERACTION WITH CDKA-1</scope>
</reference>
<reference key="6">
    <citation type="journal article" date="2004" name="Plant Physiol.">
        <title>Genome-wide analysis of the cyclin family in Arabidopsis and comparative phylogenetic analysis of plant cyclin-like proteins.</title>
        <authorList>
            <person name="Wang G."/>
            <person name="Kong H."/>
            <person name="Sun Y."/>
            <person name="Zhang X."/>
            <person name="Zhang W."/>
            <person name="Altman N."/>
            <person name="dePamphilis C.W."/>
            <person name="Ma H."/>
        </authorList>
    </citation>
    <scope>GENE FAMILY</scope>
    <scope>NOMENCLATURE</scope>
</reference>
<accession>Q9LY16</accession>